<feature type="signal peptide" evidence="3">
    <location>
        <begin position="1"/>
        <end position="21"/>
    </location>
</feature>
<feature type="chain" id="PRO_0000345389" description="Calcium-activated chloride channel regulator 4">
    <location>
        <begin position="22"/>
        <end position="919"/>
    </location>
</feature>
<feature type="chain" id="PRO_0000345390" description="Calcium-activated chloride channel regulator 4, 110 kDa form">
    <location>
        <begin position="22"/>
        <end status="unknown"/>
    </location>
</feature>
<feature type="chain" id="PRO_0000345391" description="Calcium-activated chloride channel regulator 4, 30 kDa form">
    <location>
        <begin status="unknown"/>
        <end position="919"/>
    </location>
</feature>
<feature type="transmembrane region" description="Helical" evidence="3">
    <location>
        <begin position="895"/>
        <end position="915"/>
    </location>
</feature>
<feature type="domain" description="VWFA" evidence="4">
    <location>
        <begin position="306"/>
        <end position="476"/>
    </location>
</feature>
<feature type="region of interest" description="Metalloprotease domain" evidence="2">
    <location>
        <begin position="45"/>
        <end position="199"/>
    </location>
</feature>
<feature type="region of interest" description="Disordered" evidence="5">
    <location>
        <begin position="870"/>
        <end position="893"/>
    </location>
</feature>
<feature type="active site" evidence="2">
    <location>
        <position position="156"/>
    </location>
</feature>
<feature type="binding site" evidence="2">
    <location>
        <position position="155"/>
    </location>
    <ligand>
        <name>Zn(2+)</name>
        <dbReference type="ChEBI" id="CHEBI:29105"/>
        <note>catalytic</note>
    </ligand>
</feature>
<feature type="binding site" evidence="2">
    <location>
        <position position="159"/>
    </location>
    <ligand>
        <name>Zn(2+)</name>
        <dbReference type="ChEBI" id="CHEBI:29105"/>
        <note>catalytic</note>
    </ligand>
</feature>
<feature type="binding site" evidence="2">
    <location>
        <position position="166"/>
    </location>
    <ligand>
        <name>Zn(2+)</name>
        <dbReference type="ChEBI" id="CHEBI:29105"/>
        <note>catalytic</note>
    </ligand>
</feature>
<feature type="site" description="Cleavage; by autolysis" evidence="2">
    <location>
        <begin position="697"/>
        <end position="698"/>
    </location>
</feature>
<feature type="glycosylation site" description="N-linked (GlcNAc...) asparagine" evidence="3">
    <location>
        <position position="75"/>
    </location>
</feature>
<feature type="glycosylation site" description="N-linked (GlcNAc...) asparagine" evidence="3">
    <location>
        <position position="340"/>
    </location>
</feature>
<feature type="glycosylation site" description="N-linked (GlcNAc...) asparagine" evidence="3">
    <location>
        <position position="504"/>
    </location>
</feature>
<feature type="glycosylation site" description="N-linked (GlcNAc...) asparagine" evidence="3">
    <location>
        <position position="542"/>
    </location>
</feature>
<feature type="glycosylation site" description="N-linked (GlcNAc...) asparagine" evidence="3">
    <location>
        <position position="588"/>
    </location>
</feature>
<feature type="glycosylation site" description="N-linked (GlcNAc...) asparagine" evidence="3">
    <location>
        <position position="628"/>
    </location>
</feature>
<feature type="glycosylation site" description="N-linked (GlcNAc...) asparagine" evidence="10">
    <location>
        <position position="811"/>
    </location>
</feature>
<feature type="glycosylation site" description="N-linked (GlcNAc...) asparagine" evidence="3">
    <location>
        <position position="832"/>
    </location>
</feature>
<feature type="glycosylation site" description="N-linked (GlcNAc...) asparagine" evidence="3">
    <location>
        <position position="837"/>
    </location>
</feature>
<feature type="glycosylation site" description="N-linked (GlcNAc...) asparagine" evidence="3">
    <location>
        <position position="852"/>
    </location>
</feature>
<feature type="splice variant" id="VSP_056117" description="In isoform 2." evidence="12">
    <location>
        <begin position="1"/>
        <end position="287"/>
    </location>
</feature>
<feature type="splice variant" id="VSP_056118" description="In isoform 2." evidence="12">
    <original>LESKGLTLNSNAWMNDTVIIDSTVGKDTFFLITWN</original>
    <variation>VRVLIPWVFMFTFATRKNHLVVISFEFHIFLKVNF</variation>
    <location>
        <begin position="490"/>
        <end position="524"/>
    </location>
</feature>
<feature type="splice variant" id="VSP_056119" description="In isoform 2." evidence="12">
    <location>
        <begin position="525"/>
        <end position="919"/>
    </location>
</feature>
<feature type="sequence variant" id="VAR_045816" description="In dbSNP:rs2231580.">
    <original>P</original>
    <variation>S</variation>
    <location>
        <position position="43"/>
    </location>
</feature>
<feature type="sequence variant" id="VAR_045817" description="In dbSNP:rs2839932.">
    <original>D</original>
    <variation>V</variation>
    <location>
        <position position="443"/>
    </location>
</feature>
<feature type="sequence variant" id="VAR_045818" description="In dbSNP:rs1011048.">
    <original>M</original>
    <variation>L</variation>
    <location>
        <position position="449"/>
    </location>
</feature>
<feature type="sequence variant" id="VAR_045819" description="In dbSNP:rs2231604." evidence="7">
    <original>V</original>
    <variation>L</variation>
    <location>
        <position position="810"/>
    </location>
</feature>
<feature type="sequence variant" id="VAR_045820" evidence="6 7">
    <location>
        <begin position="877"/>
        <end position="878"/>
    </location>
</feature>
<feature type="sequence conflict" description="In Ref. 1; AAD48398." evidence="13" ref="1">
    <original>S</original>
    <variation>R</variation>
    <location>
        <position position="303"/>
    </location>
</feature>
<proteinExistence type="evidence at protein level"/>
<keyword id="KW-0025">Alternative splicing</keyword>
<keyword id="KW-0068">Autocatalytic cleavage</keyword>
<keyword id="KW-1003">Cell membrane</keyword>
<keyword id="KW-0868">Chloride</keyword>
<keyword id="KW-0325">Glycoprotein</keyword>
<keyword id="KW-0378">Hydrolase</keyword>
<keyword id="KW-0472">Membrane</keyword>
<keyword id="KW-0479">Metal-binding</keyword>
<keyword id="KW-0482">Metalloprotease</keyword>
<keyword id="KW-0645">Protease</keyword>
<keyword id="KW-1267">Proteomics identification</keyword>
<keyword id="KW-1185">Reference proteome</keyword>
<keyword id="KW-0964">Secreted</keyword>
<keyword id="KW-0732">Signal</keyword>
<keyword id="KW-0812">Transmembrane</keyword>
<keyword id="KW-1133">Transmembrane helix</keyword>
<keyword id="KW-0813">Transport</keyword>
<keyword id="KW-0862">Zinc</keyword>
<organism>
    <name type="scientific">Homo sapiens</name>
    <name type="common">Human</name>
    <dbReference type="NCBI Taxonomy" id="9606"/>
    <lineage>
        <taxon>Eukaryota</taxon>
        <taxon>Metazoa</taxon>
        <taxon>Chordata</taxon>
        <taxon>Craniata</taxon>
        <taxon>Vertebrata</taxon>
        <taxon>Euteleostomi</taxon>
        <taxon>Mammalia</taxon>
        <taxon>Eutheria</taxon>
        <taxon>Euarchontoglires</taxon>
        <taxon>Primates</taxon>
        <taxon>Haplorrhini</taxon>
        <taxon>Catarrhini</taxon>
        <taxon>Hominidae</taxon>
        <taxon>Homo</taxon>
    </lineage>
</organism>
<accession>Q14CN2</accession>
<accession>A8MQC9</accession>
<accession>B7Z1Q5</accession>
<accession>Q6UX81</accession>
<accession>Q9UNF7</accession>
<dbReference type="EC" id="3.4.-.-" evidence="2"/>
<dbReference type="EMBL" id="AF127035">
    <property type="protein sequence ID" value="AAD48398.1"/>
    <property type="molecule type" value="mRNA"/>
</dbReference>
<dbReference type="EMBL" id="AY358470">
    <property type="protein sequence ID" value="AAQ88834.1"/>
    <property type="molecule type" value="mRNA"/>
</dbReference>
<dbReference type="EMBL" id="AK293766">
    <property type="protein sequence ID" value="BAH11591.1"/>
    <property type="molecule type" value="mRNA"/>
</dbReference>
<dbReference type="EMBL" id="AL122002">
    <property type="status" value="NOT_ANNOTATED_CDS"/>
    <property type="molecule type" value="Genomic_DNA"/>
</dbReference>
<dbReference type="EMBL" id="BC113687">
    <property type="protein sequence ID" value="AAI13688.1"/>
    <property type="molecule type" value="mRNA"/>
</dbReference>
<dbReference type="EMBL" id="BC113689">
    <property type="protein sequence ID" value="AAI13690.1"/>
    <property type="molecule type" value="mRNA"/>
</dbReference>
<dbReference type="CCDS" id="CCDS41355.1">
    <molecule id="Q14CN2-1"/>
</dbReference>
<dbReference type="RefSeq" id="NP_036260.2">
    <molecule id="Q14CN2-1"/>
    <property type="nucleotide sequence ID" value="NM_012128.4"/>
</dbReference>
<dbReference type="SMR" id="Q14CN2"/>
<dbReference type="BioGRID" id="116482">
    <property type="interactions" value="26"/>
</dbReference>
<dbReference type="FunCoup" id="Q14CN2">
    <property type="interactions" value="135"/>
</dbReference>
<dbReference type="IntAct" id="Q14CN2">
    <property type="interactions" value="2"/>
</dbReference>
<dbReference type="MINT" id="Q14CN2"/>
<dbReference type="STRING" id="9606.ENSP00000359594"/>
<dbReference type="ChEMBL" id="CHEMBL2364708"/>
<dbReference type="MEROPS" id="M87.002"/>
<dbReference type="TCDB" id="1.A.13.1.2">
    <property type="family name" value="the epithelial chloride channel (e-clc) family"/>
</dbReference>
<dbReference type="GlyCosmos" id="Q14CN2">
    <property type="glycosylation" value="10 sites, No reported glycans"/>
</dbReference>
<dbReference type="GlyGen" id="Q14CN2">
    <property type="glycosylation" value="15 sites"/>
</dbReference>
<dbReference type="iPTMnet" id="Q14CN2"/>
<dbReference type="PhosphoSitePlus" id="Q14CN2"/>
<dbReference type="BioMuta" id="CLCA4"/>
<dbReference type="DMDM" id="205831469"/>
<dbReference type="jPOST" id="Q14CN2"/>
<dbReference type="MassIVE" id="Q14CN2"/>
<dbReference type="PaxDb" id="9606-ENSP00000359594"/>
<dbReference type="PeptideAtlas" id="Q14CN2"/>
<dbReference type="ProteomicsDB" id="1948"/>
<dbReference type="ProteomicsDB" id="60328">
    <molecule id="Q14CN2-1"/>
</dbReference>
<dbReference type="Antibodypedia" id="2241">
    <property type="antibodies" value="56 antibodies from 14 providers"/>
</dbReference>
<dbReference type="DNASU" id="22802"/>
<dbReference type="Ensembl" id="ENST00000370563.3">
    <molecule id="Q14CN2-1"/>
    <property type="protein sequence ID" value="ENSP00000359594.3"/>
    <property type="gene ID" value="ENSG00000016602.9"/>
</dbReference>
<dbReference type="GeneID" id="22802"/>
<dbReference type="KEGG" id="hsa:22802"/>
<dbReference type="MANE-Select" id="ENST00000370563.3">
    <property type="protein sequence ID" value="ENSP00000359594.3"/>
    <property type="RefSeq nucleotide sequence ID" value="NM_012128.4"/>
    <property type="RefSeq protein sequence ID" value="NP_036260.2"/>
</dbReference>
<dbReference type="UCSC" id="uc009wcs.4">
    <molecule id="Q14CN2-1"/>
    <property type="organism name" value="human"/>
</dbReference>
<dbReference type="AGR" id="HGNC:2018"/>
<dbReference type="CTD" id="22802"/>
<dbReference type="DisGeNET" id="22802"/>
<dbReference type="GeneCards" id="CLCA4"/>
<dbReference type="HGNC" id="HGNC:2018">
    <property type="gene designation" value="CLCA4"/>
</dbReference>
<dbReference type="HPA" id="ENSG00000016602">
    <property type="expression patterns" value="Tissue enhanced (esophagus, intestine)"/>
</dbReference>
<dbReference type="MalaCards" id="CLCA4"/>
<dbReference type="MIM" id="616857">
    <property type="type" value="gene"/>
</dbReference>
<dbReference type="neXtProt" id="NX_Q14CN2"/>
<dbReference type="OpenTargets" id="ENSG00000016602"/>
<dbReference type="Orphanet" id="586">
    <property type="disease" value="Cystic fibrosis"/>
</dbReference>
<dbReference type="PharmGKB" id="PA26545"/>
<dbReference type="VEuPathDB" id="HostDB:ENSG00000016602"/>
<dbReference type="eggNOG" id="ENOG502QRRD">
    <property type="taxonomic scope" value="Eukaryota"/>
</dbReference>
<dbReference type="GeneTree" id="ENSGT00940000160416"/>
<dbReference type="HOGENOM" id="CLU_005812_0_1_1"/>
<dbReference type="InParanoid" id="Q14CN2"/>
<dbReference type="OMA" id="RQFTECE"/>
<dbReference type="OrthoDB" id="687730at2759"/>
<dbReference type="PAN-GO" id="Q14CN2">
    <property type="GO annotations" value="2 GO annotations based on evolutionary models"/>
</dbReference>
<dbReference type="PhylomeDB" id="Q14CN2"/>
<dbReference type="TreeFam" id="TF328396"/>
<dbReference type="PathwayCommons" id="Q14CN2"/>
<dbReference type="Reactome" id="R-HSA-2672351">
    <property type="pathway name" value="Stimuli-sensing channels"/>
</dbReference>
<dbReference type="SignaLink" id="Q14CN2"/>
<dbReference type="BioGRID-ORCS" id="22802">
    <property type="hits" value="10 hits in 1147 CRISPR screens"/>
</dbReference>
<dbReference type="ChiTaRS" id="CLCA4">
    <property type="organism name" value="human"/>
</dbReference>
<dbReference type="GeneWiki" id="CLCA4"/>
<dbReference type="GenomeRNAi" id="22802"/>
<dbReference type="Pharos" id="Q14CN2">
    <property type="development level" value="Tbio"/>
</dbReference>
<dbReference type="PRO" id="PR:Q14CN2"/>
<dbReference type="Proteomes" id="UP000005640">
    <property type="component" value="Chromosome 1"/>
</dbReference>
<dbReference type="RNAct" id="Q14CN2">
    <property type="molecule type" value="protein"/>
</dbReference>
<dbReference type="Bgee" id="ENSG00000016602">
    <property type="expression patterns" value="Expressed in lower esophagus mucosa and 143 other cell types or tissues"/>
</dbReference>
<dbReference type="GO" id="GO:0016324">
    <property type="term" value="C:apical plasma membrane"/>
    <property type="evidence" value="ECO:0007669"/>
    <property type="project" value="UniProtKB-SubCell"/>
</dbReference>
<dbReference type="GO" id="GO:0005576">
    <property type="term" value="C:extracellular region"/>
    <property type="evidence" value="ECO:0007669"/>
    <property type="project" value="UniProtKB-SubCell"/>
</dbReference>
<dbReference type="GO" id="GO:0005886">
    <property type="term" value="C:plasma membrane"/>
    <property type="evidence" value="ECO:0000318"/>
    <property type="project" value="GO_Central"/>
</dbReference>
<dbReference type="GO" id="GO:0005254">
    <property type="term" value="F:chloride channel activity"/>
    <property type="evidence" value="ECO:0000304"/>
    <property type="project" value="ProtInc"/>
</dbReference>
<dbReference type="GO" id="GO:0005229">
    <property type="term" value="F:intracellularly calcium-gated chloride channel activity"/>
    <property type="evidence" value="ECO:0000318"/>
    <property type="project" value="GO_Central"/>
</dbReference>
<dbReference type="GO" id="GO:0046872">
    <property type="term" value="F:metal ion binding"/>
    <property type="evidence" value="ECO:0007669"/>
    <property type="project" value="UniProtKB-KW"/>
</dbReference>
<dbReference type="GO" id="GO:0004222">
    <property type="term" value="F:metalloendopeptidase activity"/>
    <property type="evidence" value="ECO:0000304"/>
    <property type="project" value="Reactome"/>
</dbReference>
<dbReference type="GO" id="GO:0034220">
    <property type="term" value="P:monoatomic ion transmembrane transport"/>
    <property type="evidence" value="ECO:0000304"/>
    <property type="project" value="Reactome"/>
</dbReference>
<dbReference type="GO" id="GO:0006508">
    <property type="term" value="P:proteolysis"/>
    <property type="evidence" value="ECO:0007669"/>
    <property type="project" value="UniProtKB-KW"/>
</dbReference>
<dbReference type="CDD" id="cd00198">
    <property type="entry name" value="vWFA"/>
    <property type="match status" value="1"/>
</dbReference>
<dbReference type="FunFam" id="2.60.40.10:FF:001134">
    <property type="entry name" value="Calcium-activated chloride channel regulator 1"/>
    <property type="match status" value="1"/>
</dbReference>
<dbReference type="FunFam" id="3.40.50.410:FF:000034">
    <property type="entry name" value="calcium-activated chloride channel regulator 1"/>
    <property type="match status" value="1"/>
</dbReference>
<dbReference type="Gene3D" id="2.60.40.10">
    <property type="entry name" value="Immunoglobulins"/>
    <property type="match status" value="1"/>
</dbReference>
<dbReference type="Gene3D" id="3.40.50.410">
    <property type="entry name" value="von Willebrand factor, type A domain"/>
    <property type="match status" value="1"/>
</dbReference>
<dbReference type="InterPro" id="IPR004727">
    <property type="entry name" value="CLCA_chordata"/>
</dbReference>
<dbReference type="InterPro" id="IPR013642">
    <property type="entry name" value="CLCA_N"/>
</dbReference>
<dbReference type="InterPro" id="IPR051266">
    <property type="entry name" value="CLCR"/>
</dbReference>
<dbReference type="InterPro" id="IPR013783">
    <property type="entry name" value="Ig-like_fold"/>
</dbReference>
<dbReference type="InterPro" id="IPR002035">
    <property type="entry name" value="VWF_A"/>
</dbReference>
<dbReference type="InterPro" id="IPR036465">
    <property type="entry name" value="vWFA_dom_sf"/>
</dbReference>
<dbReference type="NCBIfam" id="NF041940">
    <property type="entry name" value="choice_anch_X"/>
    <property type="match status" value="1"/>
</dbReference>
<dbReference type="NCBIfam" id="TIGR00868">
    <property type="entry name" value="hCaCC"/>
    <property type="match status" value="1"/>
</dbReference>
<dbReference type="PANTHER" id="PTHR10579">
    <property type="entry name" value="CALCIUM-ACTIVATED CHLORIDE CHANNEL REGULATOR"/>
    <property type="match status" value="1"/>
</dbReference>
<dbReference type="PANTHER" id="PTHR10579:SF2">
    <property type="entry name" value="CALCIUM-ACTIVATED CHLORIDE CHANNEL REGULATOR 4"/>
    <property type="match status" value="1"/>
</dbReference>
<dbReference type="Pfam" id="PF08434">
    <property type="entry name" value="CLCA"/>
    <property type="match status" value="1"/>
</dbReference>
<dbReference type="Pfam" id="PF00092">
    <property type="entry name" value="VWA"/>
    <property type="match status" value="1"/>
</dbReference>
<dbReference type="SMART" id="SM00327">
    <property type="entry name" value="VWA"/>
    <property type="match status" value="1"/>
</dbReference>
<dbReference type="SUPFAM" id="SSF53300">
    <property type="entry name" value="vWA-like"/>
    <property type="match status" value="1"/>
</dbReference>
<dbReference type="PROSITE" id="PS50234">
    <property type="entry name" value="VWFA"/>
    <property type="match status" value="1"/>
</dbReference>
<sequence>MGLFRGFVFLLVLCLLHQSNTSFIKLNNNGFEDIVIVIDPSVPEDEKIIEQIEDMVTTASTYLFEATEKRFFFKNVSILIPENWKENPQYKRPKHENHKHADVIVAPPTLPGRDEPYTKQFTECGEKGEYIHFTPDLLLGKKQNEYGPPGKLFVHEWAHLRWGVFDEYNEDQPFYRAKSKKIEATRCSAGISGRNRVYKCQGGSCLSRACRIDSTTKLYGKDCQFFPDKVQTEKASIMFMQSIDSVVEFCNEKTHNQEAPSLQNIKCNFRSTWEVISNSEDFKNTIPMVTPPPPPVFSLLKISQRIVCLVLDKSGSMGGKDRLNRMNQAAKHFLLQTVENGSWVGMVHFDSTATIVNKLIQIKSSDERNTLMAGLPTYPLGGTSICSGIKYAFQVIGELHSQLDGSEVLLLTDGEDNTASSCIDEVKQSGAIVHFIALGRAADEAVIEMSKITGGSHFYVSDEAQNNGLIDAFGALTSGNTDLSQKSLQLESKGLTLNSNAWMNDTVIIDSTVGKDTFFLITWNSLPPSISLWDPSGTIMENFTVDATSKMAYLSIPGTAKVGTWAYNLQAKANPETLTITVTSRAANSSVPPITVNAKMNKDVNSFPSPMIVYAEILQGYVPVLGANVTAFIESQNGHTEVLELLDNGAGADSFKNDGVYSRYFTAYTENGRYSLKVRAHGGANTARLKLRPPLNRAAYIPGWVVNGEIEANPPRPEIDEDTQTTLEDFSRTASGGAFVVSQVPSLPLPDQYPPSQITDLDATVHEDKIILTWTAPGDNFDVGKVQRYIIRISASILDLRDSFDDALQVNTTDLSPKEANSKESFAFKPENISEENATHIFIAIKSIDKSNLTSKVSNIAQVTLFIPQANPDDIDPTPTPTPTPTPDKSHNSGVNISTLVLSVIGSVVIVNFILSTTI</sequence>
<reference key="1">
    <citation type="journal article" date="1999" name="FEBS Lett.">
        <title>Identification of three novel members of the calcium-dependent chloride channel (CaCC) family predominantly expressed in the digestive tract and trachea.</title>
        <authorList>
            <person name="Agnel M."/>
            <person name="Vermat T."/>
            <person name="Culouscou J.-M."/>
        </authorList>
    </citation>
    <scope>NUCLEOTIDE SEQUENCE [MRNA] (ISOFORM 1)</scope>
    <scope>VARIANT 877-PRO-THR-878 DEL</scope>
    <scope>TISSUE SPECIFICITY</scope>
    <source>
        <tissue>Colon</tissue>
    </source>
</reference>
<reference key="2">
    <citation type="journal article" date="2003" name="Genome Res.">
        <title>The secreted protein discovery initiative (SPDI), a large-scale effort to identify novel human secreted and transmembrane proteins: a bioinformatics assessment.</title>
        <authorList>
            <person name="Clark H.F."/>
            <person name="Gurney A.L."/>
            <person name="Abaya E."/>
            <person name="Baker K."/>
            <person name="Baldwin D.T."/>
            <person name="Brush J."/>
            <person name="Chen J."/>
            <person name="Chow B."/>
            <person name="Chui C."/>
            <person name="Crowley C."/>
            <person name="Currell B."/>
            <person name="Deuel B."/>
            <person name="Dowd P."/>
            <person name="Eaton D."/>
            <person name="Foster J.S."/>
            <person name="Grimaldi C."/>
            <person name="Gu Q."/>
            <person name="Hass P.E."/>
            <person name="Heldens S."/>
            <person name="Huang A."/>
            <person name="Kim H.S."/>
            <person name="Klimowski L."/>
            <person name="Jin Y."/>
            <person name="Johnson S."/>
            <person name="Lee J."/>
            <person name="Lewis L."/>
            <person name="Liao D."/>
            <person name="Mark M.R."/>
            <person name="Robbie E."/>
            <person name="Sanchez C."/>
            <person name="Schoenfeld J."/>
            <person name="Seshagiri S."/>
            <person name="Simmons L."/>
            <person name="Singh J."/>
            <person name="Smith V."/>
            <person name="Stinson J."/>
            <person name="Vagts A."/>
            <person name="Vandlen R.L."/>
            <person name="Watanabe C."/>
            <person name="Wieand D."/>
            <person name="Woods K."/>
            <person name="Xie M.-H."/>
            <person name="Yansura D.G."/>
            <person name="Yi S."/>
            <person name="Yu G."/>
            <person name="Yuan J."/>
            <person name="Zhang M."/>
            <person name="Zhang Z."/>
            <person name="Goddard A.D."/>
            <person name="Wood W.I."/>
            <person name="Godowski P.J."/>
            <person name="Gray A.M."/>
        </authorList>
    </citation>
    <scope>NUCLEOTIDE SEQUENCE [LARGE SCALE MRNA] (ISOFORM 1)</scope>
</reference>
<reference key="3">
    <citation type="journal article" date="2004" name="Nat. Genet.">
        <title>Complete sequencing and characterization of 21,243 full-length human cDNAs.</title>
        <authorList>
            <person name="Ota T."/>
            <person name="Suzuki Y."/>
            <person name="Nishikawa T."/>
            <person name="Otsuki T."/>
            <person name="Sugiyama T."/>
            <person name="Irie R."/>
            <person name="Wakamatsu A."/>
            <person name="Hayashi K."/>
            <person name="Sato H."/>
            <person name="Nagai K."/>
            <person name="Kimura K."/>
            <person name="Makita H."/>
            <person name="Sekine M."/>
            <person name="Obayashi M."/>
            <person name="Nishi T."/>
            <person name="Shibahara T."/>
            <person name="Tanaka T."/>
            <person name="Ishii S."/>
            <person name="Yamamoto J."/>
            <person name="Saito K."/>
            <person name="Kawai Y."/>
            <person name="Isono Y."/>
            <person name="Nakamura Y."/>
            <person name="Nagahari K."/>
            <person name="Murakami K."/>
            <person name="Yasuda T."/>
            <person name="Iwayanagi T."/>
            <person name="Wagatsuma M."/>
            <person name="Shiratori A."/>
            <person name="Sudo H."/>
            <person name="Hosoiri T."/>
            <person name="Kaku Y."/>
            <person name="Kodaira H."/>
            <person name="Kondo H."/>
            <person name="Sugawara M."/>
            <person name="Takahashi M."/>
            <person name="Kanda K."/>
            <person name="Yokoi T."/>
            <person name="Furuya T."/>
            <person name="Kikkawa E."/>
            <person name="Omura Y."/>
            <person name="Abe K."/>
            <person name="Kamihara K."/>
            <person name="Katsuta N."/>
            <person name="Sato K."/>
            <person name="Tanikawa M."/>
            <person name="Yamazaki M."/>
            <person name="Ninomiya K."/>
            <person name="Ishibashi T."/>
            <person name="Yamashita H."/>
            <person name="Murakawa K."/>
            <person name="Fujimori K."/>
            <person name="Tanai H."/>
            <person name="Kimata M."/>
            <person name="Watanabe M."/>
            <person name="Hiraoka S."/>
            <person name="Chiba Y."/>
            <person name="Ishida S."/>
            <person name="Ono Y."/>
            <person name="Takiguchi S."/>
            <person name="Watanabe S."/>
            <person name="Yosida M."/>
            <person name="Hotuta T."/>
            <person name="Kusano J."/>
            <person name="Kanehori K."/>
            <person name="Takahashi-Fujii A."/>
            <person name="Hara H."/>
            <person name="Tanase T.-O."/>
            <person name="Nomura Y."/>
            <person name="Togiya S."/>
            <person name="Komai F."/>
            <person name="Hara R."/>
            <person name="Takeuchi K."/>
            <person name="Arita M."/>
            <person name="Imose N."/>
            <person name="Musashino K."/>
            <person name="Yuuki H."/>
            <person name="Oshima A."/>
            <person name="Sasaki N."/>
            <person name="Aotsuka S."/>
            <person name="Yoshikawa Y."/>
            <person name="Matsunawa H."/>
            <person name="Ichihara T."/>
            <person name="Shiohata N."/>
            <person name="Sano S."/>
            <person name="Moriya S."/>
            <person name="Momiyama H."/>
            <person name="Satoh N."/>
            <person name="Takami S."/>
            <person name="Terashima Y."/>
            <person name="Suzuki O."/>
            <person name="Nakagawa S."/>
            <person name="Senoh A."/>
            <person name="Mizoguchi H."/>
            <person name="Goto Y."/>
            <person name="Shimizu F."/>
            <person name="Wakebe H."/>
            <person name="Hishigaki H."/>
            <person name="Watanabe T."/>
            <person name="Sugiyama A."/>
            <person name="Takemoto M."/>
            <person name="Kawakami B."/>
            <person name="Yamazaki M."/>
            <person name="Watanabe K."/>
            <person name="Kumagai A."/>
            <person name="Itakura S."/>
            <person name="Fukuzumi Y."/>
            <person name="Fujimori Y."/>
            <person name="Komiyama M."/>
            <person name="Tashiro H."/>
            <person name="Tanigami A."/>
            <person name="Fujiwara T."/>
            <person name="Ono T."/>
            <person name="Yamada K."/>
            <person name="Fujii Y."/>
            <person name="Ozaki K."/>
            <person name="Hirao M."/>
            <person name="Ohmori Y."/>
            <person name="Kawabata A."/>
            <person name="Hikiji T."/>
            <person name="Kobatake N."/>
            <person name="Inagaki H."/>
            <person name="Ikema Y."/>
            <person name="Okamoto S."/>
            <person name="Okitani R."/>
            <person name="Kawakami T."/>
            <person name="Noguchi S."/>
            <person name="Itoh T."/>
            <person name="Shigeta K."/>
            <person name="Senba T."/>
            <person name="Matsumura K."/>
            <person name="Nakajima Y."/>
            <person name="Mizuno T."/>
            <person name="Morinaga M."/>
            <person name="Sasaki M."/>
            <person name="Togashi T."/>
            <person name="Oyama M."/>
            <person name="Hata H."/>
            <person name="Watanabe M."/>
            <person name="Komatsu T."/>
            <person name="Mizushima-Sugano J."/>
            <person name="Satoh T."/>
            <person name="Shirai Y."/>
            <person name="Takahashi Y."/>
            <person name="Nakagawa K."/>
            <person name="Okumura K."/>
            <person name="Nagase T."/>
            <person name="Nomura N."/>
            <person name="Kikuchi H."/>
            <person name="Masuho Y."/>
            <person name="Yamashita R."/>
            <person name="Nakai K."/>
            <person name="Yada T."/>
            <person name="Nakamura Y."/>
            <person name="Ohara O."/>
            <person name="Isogai T."/>
            <person name="Sugano S."/>
        </authorList>
    </citation>
    <scope>NUCLEOTIDE SEQUENCE [LARGE SCALE MRNA] (ISOFORM 2)</scope>
    <source>
        <tissue>Cerebellum</tissue>
    </source>
</reference>
<reference key="4">
    <citation type="journal article" date="2006" name="Nature">
        <title>The DNA sequence and biological annotation of human chromosome 1.</title>
        <authorList>
            <person name="Gregory S.G."/>
            <person name="Barlow K.F."/>
            <person name="McLay K.E."/>
            <person name="Kaul R."/>
            <person name="Swarbreck D."/>
            <person name="Dunham A."/>
            <person name="Scott C.E."/>
            <person name="Howe K.L."/>
            <person name="Woodfine K."/>
            <person name="Spencer C.C.A."/>
            <person name="Jones M.C."/>
            <person name="Gillson C."/>
            <person name="Searle S."/>
            <person name="Zhou Y."/>
            <person name="Kokocinski F."/>
            <person name="McDonald L."/>
            <person name="Evans R."/>
            <person name="Phillips K."/>
            <person name="Atkinson A."/>
            <person name="Cooper R."/>
            <person name="Jones C."/>
            <person name="Hall R.E."/>
            <person name="Andrews T.D."/>
            <person name="Lloyd C."/>
            <person name="Ainscough R."/>
            <person name="Almeida J.P."/>
            <person name="Ambrose K.D."/>
            <person name="Anderson F."/>
            <person name="Andrew R.W."/>
            <person name="Ashwell R.I.S."/>
            <person name="Aubin K."/>
            <person name="Babbage A.K."/>
            <person name="Bagguley C.L."/>
            <person name="Bailey J."/>
            <person name="Beasley H."/>
            <person name="Bethel G."/>
            <person name="Bird C.P."/>
            <person name="Bray-Allen S."/>
            <person name="Brown J.Y."/>
            <person name="Brown A.J."/>
            <person name="Buckley D."/>
            <person name="Burton J."/>
            <person name="Bye J."/>
            <person name="Carder C."/>
            <person name="Chapman J.C."/>
            <person name="Clark S.Y."/>
            <person name="Clarke G."/>
            <person name="Clee C."/>
            <person name="Cobley V."/>
            <person name="Collier R.E."/>
            <person name="Corby N."/>
            <person name="Coville G.J."/>
            <person name="Davies J."/>
            <person name="Deadman R."/>
            <person name="Dunn M."/>
            <person name="Earthrowl M."/>
            <person name="Ellington A.G."/>
            <person name="Errington H."/>
            <person name="Frankish A."/>
            <person name="Frankland J."/>
            <person name="French L."/>
            <person name="Garner P."/>
            <person name="Garnett J."/>
            <person name="Gay L."/>
            <person name="Ghori M.R.J."/>
            <person name="Gibson R."/>
            <person name="Gilby L.M."/>
            <person name="Gillett W."/>
            <person name="Glithero R.J."/>
            <person name="Grafham D.V."/>
            <person name="Griffiths C."/>
            <person name="Griffiths-Jones S."/>
            <person name="Grocock R."/>
            <person name="Hammond S."/>
            <person name="Harrison E.S.I."/>
            <person name="Hart E."/>
            <person name="Haugen E."/>
            <person name="Heath P.D."/>
            <person name="Holmes S."/>
            <person name="Holt K."/>
            <person name="Howden P.J."/>
            <person name="Hunt A.R."/>
            <person name="Hunt S.E."/>
            <person name="Hunter G."/>
            <person name="Isherwood J."/>
            <person name="James R."/>
            <person name="Johnson C."/>
            <person name="Johnson D."/>
            <person name="Joy A."/>
            <person name="Kay M."/>
            <person name="Kershaw J.K."/>
            <person name="Kibukawa M."/>
            <person name="Kimberley A.M."/>
            <person name="King A."/>
            <person name="Knights A.J."/>
            <person name="Lad H."/>
            <person name="Laird G."/>
            <person name="Lawlor S."/>
            <person name="Leongamornlert D.A."/>
            <person name="Lloyd D.M."/>
            <person name="Loveland J."/>
            <person name="Lovell J."/>
            <person name="Lush M.J."/>
            <person name="Lyne R."/>
            <person name="Martin S."/>
            <person name="Mashreghi-Mohammadi M."/>
            <person name="Matthews L."/>
            <person name="Matthews N.S.W."/>
            <person name="McLaren S."/>
            <person name="Milne S."/>
            <person name="Mistry S."/>
            <person name="Moore M.J.F."/>
            <person name="Nickerson T."/>
            <person name="O'Dell C.N."/>
            <person name="Oliver K."/>
            <person name="Palmeiri A."/>
            <person name="Palmer S.A."/>
            <person name="Parker A."/>
            <person name="Patel D."/>
            <person name="Pearce A.V."/>
            <person name="Peck A.I."/>
            <person name="Pelan S."/>
            <person name="Phelps K."/>
            <person name="Phillimore B.J."/>
            <person name="Plumb R."/>
            <person name="Rajan J."/>
            <person name="Raymond C."/>
            <person name="Rouse G."/>
            <person name="Saenphimmachak C."/>
            <person name="Sehra H.K."/>
            <person name="Sheridan E."/>
            <person name="Shownkeen R."/>
            <person name="Sims S."/>
            <person name="Skuce C.D."/>
            <person name="Smith M."/>
            <person name="Steward C."/>
            <person name="Subramanian S."/>
            <person name="Sycamore N."/>
            <person name="Tracey A."/>
            <person name="Tromans A."/>
            <person name="Van Helmond Z."/>
            <person name="Wall M."/>
            <person name="Wallis J.M."/>
            <person name="White S."/>
            <person name="Whitehead S.L."/>
            <person name="Wilkinson J.E."/>
            <person name="Willey D.L."/>
            <person name="Williams H."/>
            <person name="Wilming L."/>
            <person name="Wray P.W."/>
            <person name="Wu Z."/>
            <person name="Coulson A."/>
            <person name="Vaudin M."/>
            <person name="Sulston J.E."/>
            <person name="Durbin R.M."/>
            <person name="Hubbard T."/>
            <person name="Wooster R."/>
            <person name="Dunham I."/>
            <person name="Carter N.P."/>
            <person name="McVean G."/>
            <person name="Ross M.T."/>
            <person name="Harrow J."/>
            <person name="Olson M.V."/>
            <person name="Beck S."/>
            <person name="Rogers J."/>
            <person name="Bentley D.R."/>
        </authorList>
    </citation>
    <scope>NUCLEOTIDE SEQUENCE [LARGE SCALE GENOMIC DNA]</scope>
</reference>
<reference key="5">
    <citation type="journal article" date="2004" name="Genome Res.">
        <title>The status, quality, and expansion of the NIH full-length cDNA project: the Mammalian Gene Collection (MGC).</title>
        <authorList>
            <consortium name="The MGC Project Team"/>
        </authorList>
    </citation>
    <scope>NUCLEOTIDE SEQUENCE [LARGE SCALE MRNA] (ISOFORM 1)</scope>
    <scope>VARIANTS LEU-810 AND 877-PRO-THR-878 DEL</scope>
</reference>
<reference key="6">
    <citation type="journal article" date="2004" name="Hum. Genet.">
        <title>The CLCA gene locus as a modulator of the gastrointestinal basic defect in cystic fibrosis.</title>
        <authorList>
            <person name="Ritzka M."/>
            <person name="Stanke F."/>
            <person name="Jansen S."/>
            <person name="Gruber A.D."/>
            <person name="Pusch L."/>
            <person name="Woelfl S."/>
            <person name="Veeze H.J."/>
            <person name="Halley D.J."/>
            <person name="Tummler B."/>
        </authorList>
    </citation>
    <scope>TISSUE SPECIFICITY</scope>
</reference>
<reference key="7">
    <citation type="journal article" date="2005" name="Acta Oto-Laryngol.">
        <title>Expression and distribution of ion transport mRNAs in human nasal mucosa and nasal polyps.</title>
        <authorList>
            <person name="Lee S.H."/>
            <person name="Park J.H."/>
            <person name="Jung H.H."/>
            <person name="Lee S.H."/>
            <person name="Oh J.W."/>
            <person name="Lee H.M."/>
            <person name="Jun H.S."/>
            <person name="Cho W.J."/>
            <person name="Lee J.Y."/>
        </authorList>
    </citation>
    <scope>TISSUE SPECIFICITY</scope>
</reference>
<reference key="8">
    <citation type="journal article" date="2006" name="J. Proteome Res.">
        <title>Identification of N-linked glycoproteins in human saliva by glycoprotein capture and mass spectrometry.</title>
        <authorList>
            <person name="Ramachandran P."/>
            <person name="Boontheung P."/>
            <person name="Xie Y."/>
            <person name="Sondej M."/>
            <person name="Wong D.T."/>
            <person name="Loo J.A."/>
        </authorList>
    </citation>
    <scope>GLYCOSYLATION [LARGE SCALE ANALYSIS] AT ASN-811</scope>
    <source>
        <tissue>Saliva</tissue>
    </source>
</reference>
<reference key="9">
    <citation type="journal article" date="2008" name="BMC Genomics">
        <title>Transcriptomic dissection of tongue squamous cell carcinoma.</title>
        <authorList>
            <person name="Ye H."/>
            <person name="Yu T."/>
            <person name="Temam S."/>
            <person name="Ziober B.L."/>
            <person name="Wang J."/>
            <person name="Schwartz J.L."/>
            <person name="Mao L."/>
            <person name="Wong D.T."/>
            <person name="Zhou X."/>
        </authorList>
    </citation>
    <scope>INDUCTION</scope>
</reference>
<gene>
    <name type="primary">CLCA4</name>
    <name type="synonym">CaCC2</name>
    <name type="ORF">UNQ562/PRO1124</name>
</gene>
<name>CLCA4_HUMAN</name>
<evidence type="ECO:0000250" key="1"/>
<evidence type="ECO:0000250" key="2">
    <source>
        <dbReference type="UniProtKB" id="A8K7I4"/>
    </source>
</evidence>
<evidence type="ECO:0000255" key="3"/>
<evidence type="ECO:0000255" key="4">
    <source>
        <dbReference type="PROSITE-ProRule" id="PRU00219"/>
    </source>
</evidence>
<evidence type="ECO:0000256" key="5">
    <source>
        <dbReference type="SAM" id="MobiDB-lite"/>
    </source>
</evidence>
<evidence type="ECO:0000269" key="6">
    <source>
    </source>
</evidence>
<evidence type="ECO:0000269" key="7">
    <source>
    </source>
</evidence>
<evidence type="ECO:0000269" key="8">
    <source>
    </source>
</evidence>
<evidence type="ECO:0000269" key="9">
    <source>
    </source>
</evidence>
<evidence type="ECO:0000269" key="10">
    <source>
    </source>
</evidence>
<evidence type="ECO:0000269" key="11">
    <source>
    </source>
</evidence>
<evidence type="ECO:0000303" key="12">
    <source>
    </source>
</evidence>
<evidence type="ECO:0000305" key="13"/>
<comment type="function">
    <text>May be involved in mediating calcium-activated chloride conductance.</text>
</comment>
<comment type="subcellular location">
    <subcellularLocation>
        <location evidence="1">Cell membrane</location>
        <topology evidence="1">Single-pass membrane protein</topology>
    </subcellularLocation>
    <subcellularLocation>
        <location evidence="1">Apical cell membrane</location>
    </subcellularLocation>
    <subcellularLocation>
        <location evidence="1">Secreted</location>
    </subcellularLocation>
    <text evidence="1">The C-terminus 30 kDa form is anchored to the membrane. The N-terminus 110 kDa form is released from the membrane triggered by an unknown stimulus.</text>
</comment>
<comment type="alternative products">
    <event type="alternative splicing"/>
    <isoform>
        <id>Q14CN2-1</id>
        <name>1</name>
        <sequence type="displayed"/>
    </isoform>
    <isoform>
        <id>Q14CN2-2</id>
        <name>2</name>
        <sequence type="described" ref="VSP_056117 VSP_056118 VSP_056119"/>
    </isoform>
</comment>
<comment type="tissue specificity">
    <text evidence="6 8 9">Primarily expressed in the digestive tract, mainly in colon. Detected in smaller amounts in brain, urogenital organs, testis, and salivary and mammary glands. Highly expressed in the epithelial layer and submucosal gland of the inferior turbinate mucosa. Lower levels in the epithelial layer of nasal polyp.</text>
</comment>
<comment type="induction">
    <text evidence="11">Down-regulated in oral tongue squamous cell carcinomas.</text>
</comment>
<comment type="domain">
    <text evidence="2">The metalloprotease region is responsible for autoproteolytic processing. It can also cross-cleave other CLCA substrates.</text>
</comment>
<comment type="PTM">
    <text evidence="2">The translation product is autoproteolytically cleaved by the metalloprotease domain in the endoplasmic reticulum into a N-terminal and a C-terminal products that remain physically associated with each other. The cleavage is necessary for calcium-activated chloride channel (CaCC) activation activity.</text>
</comment>
<comment type="similarity">
    <text evidence="13">Belongs to the CLCR family.</text>
</comment>
<protein>
    <recommendedName>
        <fullName>Calcium-activated chloride channel regulator 4</fullName>
        <ecNumber evidence="2">3.4.-.-</ecNumber>
    </recommendedName>
    <alternativeName>
        <fullName>Calcium-activated chloride channel family member 4</fullName>
        <shortName>hCLCA4</shortName>
    </alternativeName>
    <alternativeName>
        <fullName>Calcium-activated chloride channel protein 2</fullName>
        <shortName>CaCC-2</shortName>
        <shortName>hCaCC-2</shortName>
    </alternativeName>
    <alternativeName>
        <fullName>Chloride channel accessory 4</fullName>
    </alternativeName>
    <component>
        <recommendedName>
            <fullName>Calcium-activated chloride channel regulator 4, 110 kDa form</fullName>
        </recommendedName>
    </component>
    <component>
        <recommendedName>
            <fullName>Calcium-activated chloride channel regulator 4, 30 kDa form</fullName>
        </recommendedName>
    </component>
</protein>